<keyword id="KW-0067">ATP-binding</keyword>
<keyword id="KW-0143">Chaperone</keyword>
<keyword id="KW-0175">Coiled coil</keyword>
<keyword id="KW-0963">Cytoplasm</keyword>
<keyword id="KW-0547">Nucleotide-binding</keyword>
<keyword id="KW-1267">Proteomics identification</keyword>
<keyword id="KW-1185">Reference proteome</keyword>
<keyword id="KW-0346">Stress response</keyword>
<feature type="chain" id="PRO_0000336047" description="Putative heat shock protein HSP 90-beta-3">
    <location>
        <begin position="1"/>
        <end position="597"/>
    </location>
</feature>
<feature type="region of interest" description="Disordered" evidence="3">
    <location>
        <begin position="201"/>
        <end position="241"/>
    </location>
</feature>
<feature type="region of interest" description="Disordered" evidence="3">
    <location>
        <begin position="564"/>
        <end position="597"/>
    </location>
</feature>
<feature type="coiled-coil region" evidence="2">
    <location>
        <begin position="414"/>
        <end position="446"/>
    </location>
</feature>
<feature type="short sequence motif" description="TPR repeat-binding">
    <location>
        <begin position="593"/>
        <end position="597"/>
    </location>
</feature>
<feature type="compositionally biased region" description="Acidic residues" evidence="3">
    <location>
        <begin position="204"/>
        <end position="223"/>
    </location>
</feature>
<feature type="compositionally biased region" description="Basic and acidic residues" evidence="3">
    <location>
        <begin position="224"/>
        <end position="233"/>
    </location>
</feature>
<feature type="compositionally biased region" description="Acidic residues" evidence="3">
    <location>
        <begin position="564"/>
        <end position="578"/>
    </location>
</feature>
<feature type="binding site" evidence="1">
    <location>
        <position position="46"/>
    </location>
    <ligand>
        <name>ATP</name>
        <dbReference type="ChEBI" id="CHEBI:30616"/>
    </ligand>
</feature>
<feature type="binding site" evidence="1">
    <location>
        <position position="88"/>
    </location>
    <ligand>
        <name>ATP</name>
        <dbReference type="ChEBI" id="CHEBI:30616"/>
    </ligand>
</feature>
<feature type="binding site" evidence="1">
    <location>
        <position position="107"/>
    </location>
    <ligand>
        <name>ATP</name>
        <dbReference type="ChEBI" id="CHEBI:30616"/>
    </ligand>
</feature>
<feature type="binding site" evidence="1">
    <location>
        <position position="334"/>
    </location>
    <ligand>
        <name>ATP</name>
        <dbReference type="ChEBI" id="CHEBI:30616"/>
    </ligand>
</feature>
<gene>
    <name type="primary">HSP90AB3P</name>
    <name type="synonym">HSP90BC</name>
</gene>
<dbReference type="EMBL" id="AY956764">
    <property type="protein sequence ID" value="AAX38251.1"/>
    <property type="molecule type" value="mRNA"/>
</dbReference>
<dbReference type="SMR" id="Q58FF7"/>
<dbReference type="FunCoup" id="Q58FF7">
    <property type="interactions" value="692"/>
</dbReference>
<dbReference type="IntAct" id="Q58FF7">
    <property type="interactions" value="67"/>
</dbReference>
<dbReference type="MINT" id="Q58FF7"/>
<dbReference type="GlyConnect" id="1697">
    <property type="glycosylation" value="2 N-Linked glycans (2 sites)"/>
</dbReference>
<dbReference type="GlyCosmos" id="Q58FF7">
    <property type="glycosylation" value="4 sites, 4 glycans"/>
</dbReference>
<dbReference type="GlyGen" id="Q58FF7">
    <property type="glycosylation" value="4 sites, 4 N-linked glycans (2 sites), 2 O-linked glycans (2 sites)"/>
</dbReference>
<dbReference type="iPTMnet" id="Q58FF7"/>
<dbReference type="PhosphoSitePlus" id="Q58FF7"/>
<dbReference type="SwissPalm" id="Q58FF7"/>
<dbReference type="BioMuta" id="HGNC:5259"/>
<dbReference type="DMDM" id="74722492"/>
<dbReference type="jPOST" id="Q58FF7"/>
<dbReference type="MassIVE" id="Q58FF7"/>
<dbReference type="ProteomicsDB" id="62622"/>
<dbReference type="Pumba" id="Q58FF7"/>
<dbReference type="TopDownProteomics" id="Q58FF7"/>
<dbReference type="AGR" id="HGNC:5259"/>
<dbReference type="GeneCards" id="HSP90AB3P"/>
<dbReference type="HGNC" id="HGNC:5259">
    <property type="gene designation" value="HSP90AB3P"/>
</dbReference>
<dbReference type="neXtProt" id="NX_Q58FF7"/>
<dbReference type="InParanoid" id="Q58FF7"/>
<dbReference type="PAN-GO" id="Q58FF7">
    <property type="GO annotations" value="10 GO annotations based on evolutionary models"/>
</dbReference>
<dbReference type="PhylomeDB" id="Q58FF7"/>
<dbReference type="PathwayCommons" id="Q58FF7"/>
<dbReference type="SignaLink" id="Q58FF7"/>
<dbReference type="ChiTaRS" id="HSP90AB3P">
    <property type="organism name" value="human"/>
</dbReference>
<dbReference type="Pharos" id="Q58FF7">
    <property type="development level" value="Tdark"/>
</dbReference>
<dbReference type="PRO" id="PR:Q58FF7"/>
<dbReference type="Proteomes" id="UP000005640">
    <property type="component" value="Unplaced"/>
</dbReference>
<dbReference type="RNAct" id="Q58FF7">
    <property type="molecule type" value="protein"/>
</dbReference>
<dbReference type="GO" id="GO:0005829">
    <property type="term" value="C:cytosol"/>
    <property type="evidence" value="ECO:0000318"/>
    <property type="project" value="GO_Central"/>
</dbReference>
<dbReference type="GO" id="GO:0070062">
    <property type="term" value="C:extracellular exosome"/>
    <property type="evidence" value="ECO:0007005"/>
    <property type="project" value="UniProtKB"/>
</dbReference>
<dbReference type="GO" id="GO:0048471">
    <property type="term" value="C:perinuclear region of cytoplasm"/>
    <property type="evidence" value="ECO:0000318"/>
    <property type="project" value="GO_Central"/>
</dbReference>
<dbReference type="GO" id="GO:0005886">
    <property type="term" value="C:plasma membrane"/>
    <property type="evidence" value="ECO:0000318"/>
    <property type="project" value="GO_Central"/>
</dbReference>
<dbReference type="GO" id="GO:0032991">
    <property type="term" value="C:protein-containing complex"/>
    <property type="evidence" value="ECO:0000318"/>
    <property type="project" value="GO_Central"/>
</dbReference>
<dbReference type="GO" id="GO:0005524">
    <property type="term" value="F:ATP binding"/>
    <property type="evidence" value="ECO:0000318"/>
    <property type="project" value="GO_Central"/>
</dbReference>
<dbReference type="GO" id="GO:0016887">
    <property type="term" value="F:ATP hydrolysis activity"/>
    <property type="evidence" value="ECO:0000318"/>
    <property type="project" value="GO_Central"/>
</dbReference>
<dbReference type="GO" id="GO:0140662">
    <property type="term" value="F:ATP-dependent protein folding chaperone"/>
    <property type="evidence" value="ECO:0007669"/>
    <property type="project" value="InterPro"/>
</dbReference>
<dbReference type="GO" id="GO:0051082">
    <property type="term" value="F:unfolded protein binding"/>
    <property type="evidence" value="ECO:0000318"/>
    <property type="project" value="GO_Central"/>
</dbReference>
<dbReference type="GO" id="GO:0034605">
    <property type="term" value="P:cellular response to heat"/>
    <property type="evidence" value="ECO:0000318"/>
    <property type="project" value="GO_Central"/>
</dbReference>
<dbReference type="GO" id="GO:0006457">
    <property type="term" value="P:protein folding"/>
    <property type="evidence" value="ECO:0000318"/>
    <property type="project" value="GO_Central"/>
</dbReference>
<dbReference type="GO" id="GO:0050821">
    <property type="term" value="P:protein stabilization"/>
    <property type="evidence" value="ECO:0000318"/>
    <property type="project" value="GO_Central"/>
</dbReference>
<dbReference type="CDD" id="cd16927">
    <property type="entry name" value="HATPase_Hsp90-like"/>
    <property type="match status" value="1"/>
</dbReference>
<dbReference type="FunFam" id="3.30.565.10:FF:000005">
    <property type="entry name" value="Heat shock protein 90"/>
    <property type="match status" value="1"/>
</dbReference>
<dbReference type="FunFam" id="1.20.120.790:FF:000001">
    <property type="entry name" value="Heat shock protein 90 alpha"/>
    <property type="match status" value="1"/>
</dbReference>
<dbReference type="FunFam" id="3.30.230.80:FF:000001">
    <property type="entry name" value="Heat shock protein 90 alpha"/>
    <property type="match status" value="1"/>
</dbReference>
<dbReference type="FunFam" id="3.40.50.11260:FF:000001">
    <property type="entry name" value="Heat shock protein 90 alpha"/>
    <property type="match status" value="1"/>
</dbReference>
<dbReference type="Gene3D" id="3.30.230.80">
    <property type="match status" value="1"/>
</dbReference>
<dbReference type="Gene3D" id="1.20.120.790">
    <property type="entry name" value="Heat shock protein 90, C-terminal domain"/>
    <property type="match status" value="1"/>
</dbReference>
<dbReference type="Gene3D" id="3.30.565.10">
    <property type="entry name" value="Histidine kinase-like ATPase, C-terminal domain"/>
    <property type="match status" value="2"/>
</dbReference>
<dbReference type="InterPro" id="IPR036890">
    <property type="entry name" value="HATPase_C_sf"/>
</dbReference>
<dbReference type="InterPro" id="IPR037196">
    <property type="entry name" value="HSP90_C"/>
</dbReference>
<dbReference type="InterPro" id="IPR001404">
    <property type="entry name" value="Hsp90_fam"/>
</dbReference>
<dbReference type="InterPro" id="IPR020575">
    <property type="entry name" value="Hsp90_N"/>
</dbReference>
<dbReference type="InterPro" id="IPR020568">
    <property type="entry name" value="Ribosomal_Su5_D2-typ_SF"/>
</dbReference>
<dbReference type="PANTHER" id="PTHR11528">
    <property type="entry name" value="HEAT SHOCK PROTEIN 90 FAMILY MEMBER"/>
    <property type="match status" value="1"/>
</dbReference>
<dbReference type="Pfam" id="PF00183">
    <property type="entry name" value="HSP90"/>
    <property type="match status" value="3"/>
</dbReference>
<dbReference type="PIRSF" id="PIRSF002583">
    <property type="entry name" value="Hsp90"/>
    <property type="match status" value="1"/>
</dbReference>
<dbReference type="PRINTS" id="PR00775">
    <property type="entry name" value="HEATSHOCK90"/>
</dbReference>
<dbReference type="SUPFAM" id="SSF55874">
    <property type="entry name" value="ATPase domain of HSP90 chaperone/DNA topoisomerase II/histidine kinase"/>
    <property type="match status" value="1"/>
</dbReference>
<dbReference type="SUPFAM" id="SSF110942">
    <property type="entry name" value="HSP90 C-terminal domain"/>
    <property type="match status" value="1"/>
</dbReference>
<dbReference type="SUPFAM" id="SSF54211">
    <property type="entry name" value="Ribosomal protein S5 domain 2-like"/>
    <property type="match status" value="1"/>
</dbReference>
<evidence type="ECO:0000250" key="1"/>
<evidence type="ECO:0000255" key="2"/>
<evidence type="ECO:0000256" key="3">
    <source>
        <dbReference type="SAM" id="MobiDB-lite"/>
    </source>
</evidence>
<evidence type="ECO:0000305" key="4"/>
<sequence length="597" mass="68325">MPEEVHHGEEEVETFAFQAEIAQLISLIINTFYSNEEIFLQELISNASDALDKIRYESLTDPSKLDSGKELKIDIIPNPQERTLALVDTGIGMTKADLINNLRTIAKSGTKACMEALQAEKLVVITKHNDDEQYAWESSAGGSFTVHADHGEPIGRGTKVILHLKEDQTEYLEERRVKEVVKKHSQFIGYPITLYLEKEQDKEISDDEAEEEKGEKEEEDKDDEEKPKIKDVGSDEEDDSKEYGEFYKSLTSDWEDHLAVKHFSVEGQLEFRALLFSPRRAPFDLFENKKKKNNIKLYVRRVFIMDSCDELIPEYLNFIHGVVDSEDLPLNISREMLQQSKILKYVSHMKETQKSTYYITGESKEQVANSAFVERVRKQGFEVVYMTEPIDEYCVQQLKEFDGKSLVSVTKEGLELPEDEEEKKKMEESKEKFENLCKLMKEILDKKVEKVTISNRLVSSPCCIVTSTYGWTANMEQIMKAQALRDNSTMGYMMAKKHLEINPDHPIMETLRQKAEADKNDKAVKDLVVLLFETALLSSGFSLEDPQTHSNHIYHMIKLGLGTDEDEVAAEEPSDAVPDEIPPLEGDEDASRMEEVD</sequence>
<comment type="function">
    <text evidence="1">Putative molecular chaperone that may promote the maturation, structural maintenance and proper regulation of specific target proteins.</text>
</comment>
<comment type="subunit">
    <text evidence="1">Homodimer.</text>
</comment>
<comment type="subcellular location">
    <subcellularLocation>
        <location evidence="1">Cytoplasm</location>
    </subcellularLocation>
</comment>
<comment type="domain">
    <text evidence="1">The TPR repeat-binding motif mediates interaction with TPR repeat-containing proteins.</text>
</comment>
<comment type="similarity">
    <text evidence="4">Belongs to the heat shock protein 90 family.</text>
</comment>
<comment type="caution">
    <text evidence="4">Could be the product of a pseudogene.</text>
</comment>
<proteinExistence type="uncertain"/>
<accession>Q58FF7</accession>
<name>H90B3_HUMAN</name>
<protein>
    <recommendedName>
        <fullName>Putative heat shock protein HSP 90-beta-3</fullName>
    </recommendedName>
    <alternativeName>
        <fullName>Heat shock protein 90-beta c</fullName>
        <shortName>Heat shock protein 90Bc</shortName>
    </alternativeName>
</protein>
<organism>
    <name type="scientific">Homo sapiens</name>
    <name type="common">Human</name>
    <dbReference type="NCBI Taxonomy" id="9606"/>
    <lineage>
        <taxon>Eukaryota</taxon>
        <taxon>Metazoa</taxon>
        <taxon>Chordata</taxon>
        <taxon>Craniata</taxon>
        <taxon>Vertebrata</taxon>
        <taxon>Euteleostomi</taxon>
        <taxon>Mammalia</taxon>
        <taxon>Eutheria</taxon>
        <taxon>Euarchontoglires</taxon>
        <taxon>Primates</taxon>
        <taxon>Haplorrhini</taxon>
        <taxon>Catarrhini</taxon>
        <taxon>Hominidae</taxon>
        <taxon>Homo</taxon>
    </lineage>
</organism>
<reference key="1">
    <citation type="journal article" date="2005" name="Genomics">
        <title>The HSP90 family of genes in the human genome: insights into their divergence and evolution.</title>
        <authorList>
            <person name="Chen B."/>
            <person name="Piel W.H."/>
            <person name="Gui L."/>
            <person name="Bruford E."/>
            <person name="Monteiro A."/>
        </authorList>
    </citation>
    <scope>NUCLEOTIDE SEQUENCE [MRNA]</scope>
</reference>